<comment type="function">
    <text evidence="1">One of several proteins that assist in the late maturation steps of the functional core of the 30S ribosomal subunit. Associates with free 30S ribosomal subunits (but not with 30S subunits that are part of 70S ribosomes or polysomes). Required for efficient processing of 16S rRNA. May interact with the 5'-terminal helix region of 16S rRNA.</text>
</comment>
<comment type="subunit">
    <text evidence="1">Monomer. Binds 30S ribosomal subunits, but not 50S ribosomal subunits or 70S ribosomes.</text>
</comment>
<comment type="subcellular location">
    <subcellularLocation>
        <location evidence="1">Cytoplasm</location>
    </subcellularLocation>
</comment>
<comment type="similarity">
    <text evidence="1">Belongs to the RbfA family.</text>
</comment>
<evidence type="ECO:0000255" key="1">
    <source>
        <dbReference type="HAMAP-Rule" id="MF_00003"/>
    </source>
</evidence>
<gene>
    <name evidence="1" type="primary">rbfA</name>
    <name type="ordered locus">VSAL_I0599</name>
</gene>
<keyword id="KW-0963">Cytoplasm</keyword>
<keyword id="KW-0690">Ribosome biogenesis</keyword>
<proteinExistence type="inferred from homology"/>
<sequence>MSKEFSRAQRVSQQLQKELAVILQREVRDSRIGMVTISDVEVSRDLAYAKVFVTFFCVGEQTPETCLAALKEHEVPVRMMLGKRIRHRLTPEVRFTYDNTLVEGMRMSNLVSDVVNTDKRKMAESGRTESDEGEE</sequence>
<organism>
    <name type="scientific">Aliivibrio salmonicida (strain LFI1238)</name>
    <name type="common">Vibrio salmonicida (strain LFI1238)</name>
    <dbReference type="NCBI Taxonomy" id="316275"/>
    <lineage>
        <taxon>Bacteria</taxon>
        <taxon>Pseudomonadati</taxon>
        <taxon>Pseudomonadota</taxon>
        <taxon>Gammaproteobacteria</taxon>
        <taxon>Vibrionales</taxon>
        <taxon>Vibrionaceae</taxon>
        <taxon>Aliivibrio</taxon>
    </lineage>
</organism>
<protein>
    <recommendedName>
        <fullName evidence="1">Ribosome-binding factor A</fullName>
    </recommendedName>
</protein>
<reference key="1">
    <citation type="journal article" date="2008" name="BMC Genomics">
        <title>The genome sequence of the fish pathogen Aliivibrio salmonicida strain LFI1238 shows extensive evidence of gene decay.</title>
        <authorList>
            <person name="Hjerde E."/>
            <person name="Lorentzen M.S."/>
            <person name="Holden M.T."/>
            <person name="Seeger K."/>
            <person name="Paulsen S."/>
            <person name="Bason N."/>
            <person name="Churcher C."/>
            <person name="Harris D."/>
            <person name="Norbertczak H."/>
            <person name="Quail M.A."/>
            <person name="Sanders S."/>
            <person name="Thurston S."/>
            <person name="Parkhill J."/>
            <person name="Willassen N.P."/>
            <person name="Thomson N.R."/>
        </authorList>
    </citation>
    <scope>NUCLEOTIDE SEQUENCE [LARGE SCALE GENOMIC DNA]</scope>
    <source>
        <strain>LFI1238</strain>
    </source>
</reference>
<accession>B6ENE3</accession>
<feature type="chain" id="PRO_1000088854" description="Ribosome-binding factor A">
    <location>
        <begin position="1"/>
        <end position="135"/>
    </location>
</feature>
<dbReference type="EMBL" id="FM178379">
    <property type="protein sequence ID" value="CAQ78284.1"/>
    <property type="molecule type" value="Genomic_DNA"/>
</dbReference>
<dbReference type="RefSeq" id="WP_012549407.1">
    <property type="nucleotide sequence ID" value="NC_011312.1"/>
</dbReference>
<dbReference type="SMR" id="B6ENE3"/>
<dbReference type="KEGG" id="vsa:VSAL_I0599"/>
<dbReference type="eggNOG" id="COG0858">
    <property type="taxonomic scope" value="Bacteria"/>
</dbReference>
<dbReference type="HOGENOM" id="CLU_089475_5_0_6"/>
<dbReference type="Proteomes" id="UP000001730">
    <property type="component" value="Chromosome 1"/>
</dbReference>
<dbReference type="GO" id="GO:0005829">
    <property type="term" value="C:cytosol"/>
    <property type="evidence" value="ECO:0007669"/>
    <property type="project" value="TreeGrafter"/>
</dbReference>
<dbReference type="GO" id="GO:0043024">
    <property type="term" value="F:ribosomal small subunit binding"/>
    <property type="evidence" value="ECO:0007669"/>
    <property type="project" value="TreeGrafter"/>
</dbReference>
<dbReference type="GO" id="GO:0030490">
    <property type="term" value="P:maturation of SSU-rRNA"/>
    <property type="evidence" value="ECO:0007669"/>
    <property type="project" value="UniProtKB-UniRule"/>
</dbReference>
<dbReference type="FunFam" id="3.30.300.20:FF:000007">
    <property type="entry name" value="Ribosome-binding factor A"/>
    <property type="match status" value="1"/>
</dbReference>
<dbReference type="Gene3D" id="3.30.300.20">
    <property type="match status" value="1"/>
</dbReference>
<dbReference type="HAMAP" id="MF_00003">
    <property type="entry name" value="RbfA"/>
    <property type="match status" value="1"/>
</dbReference>
<dbReference type="InterPro" id="IPR015946">
    <property type="entry name" value="KH_dom-like_a/b"/>
</dbReference>
<dbReference type="InterPro" id="IPR000238">
    <property type="entry name" value="RbfA"/>
</dbReference>
<dbReference type="InterPro" id="IPR023799">
    <property type="entry name" value="RbfA_dom_sf"/>
</dbReference>
<dbReference type="NCBIfam" id="TIGR00082">
    <property type="entry name" value="rbfA"/>
    <property type="match status" value="1"/>
</dbReference>
<dbReference type="PANTHER" id="PTHR33515">
    <property type="entry name" value="RIBOSOME-BINDING FACTOR A, CHLOROPLASTIC-RELATED"/>
    <property type="match status" value="1"/>
</dbReference>
<dbReference type="PANTHER" id="PTHR33515:SF1">
    <property type="entry name" value="RIBOSOME-BINDING FACTOR A, CHLOROPLASTIC-RELATED"/>
    <property type="match status" value="1"/>
</dbReference>
<dbReference type="Pfam" id="PF02033">
    <property type="entry name" value="RBFA"/>
    <property type="match status" value="1"/>
</dbReference>
<dbReference type="SUPFAM" id="SSF89919">
    <property type="entry name" value="Ribosome-binding factor A, RbfA"/>
    <property type="match status" value="1"/>
</dbReference>
<name>RBFA_ALISL</name>